<name>MAT1_EUGGR</name>
<accession>P05728</accession>
<geneLocation type="chloroplast"/>
<comment type="function">
    <text>Could be required for group III intron excision.</text>
</comment>
<comment type="subcellular location">
    <subcellularLocation>
        <location>Plastid</location>
        <location>Chloroplast</location>
    </subcellularLocation>
</comment>
<comment type="similarity">
    <text evidence="1">To group II intron maturases.</text>
</comment>
<protein>
    <recommendedName>
        <fullName>Maturase-like protein 1</fullName>
    </recommendedName>
</protein>
<dbReference type="EMBL" id="Z11874">
    <property type="status" value="NOT_ANNOTATED_CDS"/>
    <property type="molecule type" value="Genomic_DNA"/>
</dbReference>
<dbReference type="EMBL" id="X04509">
    <property type="protein sequence ID" value="CAA28194.1"/>
    <property type="molecule type" value="Genomic_DNA"/>
</dbReference>
<dbReference type="EMBL" id="X70810">
    <property type="protein sequence ID" value="CAA50081.1"/>
    <property type="molecule type" value="Genomic_DNA"/>
</dbReference>
<dbReference type="PIR" id="JT0170">
    <property type="entry name" value="QQEGC4"/>
</dbReference>
<dbReference type="RefSeq" id="NP_041894.1">
    <property type="nucleotide sequence ID" value="NC_001603.2"/>
</dbReference>
<dbReference type="SMR" id="P05728"/>
<dbReference type="GeneID" id="807513"/>
<dbReference type="GO" id="GO:0009507">
    <property type="term" value="C:chloroplast"/>
    <property type="evidence" value="ECO:0007669"/>
    <property type="project" value="UniProtKB-SubCell"/>
</dbReference>
<dbReference type="GO" id="GO:0006397">
    <property type="term" value="P:mRNA processing"/>
    <property type="evidence" value="ECO:0007669"/>
    <property type="project" value="UniProtKB-KW"/>
</dbReference>
<dbReference type="InterPro" id="IPR051083">
    <property type="entry name" value="GrpII_Intron_Splice-Mob/Def"/>
</dbReference>
<dbReference type="InterPro" id="IPR025960">
    <property type="entry name" value="RVT_N"/>
</dbReference>
<dbReference type="PANTHER" id="PTHR34047">
    <property type="entry name" value="NUCLEAR INTRON MATURASE 1, MITOCHONDRIAL-RELATED"/>
    <property type="match status" value="1"/>
</dbReference>
<dbReference type="PANTHER" id="PTHR34047:SF8">
    <property type="entry name" value="PROTEIN YKFC"/>
    <property type="match status" value="1"/>
</dbReference>
<dbReference type="Pfam" id="PF13655">
    <property type="entry name" value="RVT_N"/>
    <property type="match status" value="1"/>
</dbReference>
<organism>
    <name type="scientific">Euglena gracilis</name>
    <dbReference type="NCBI Taxonomy" id="3039"/>
    <lineage>
        <taxon>Eukaryota</taxon>
        <taxon>Discoba</taxon>
        <taxon>Euglenozoa</taxon>
        <taxon>Euglenida</taxon>
        <taxon>Spirocuta</taxon>
        <taxon>Euglenophyceae</taxon>
        <taxon>Euglenales</taxon>
        <taxon>Euglenaceae</taxon>
        <taxon>Euglena</taxon>
    </lineage>
</organism>
<keyword id="KW-0150">Chloroplast</keyword>
<keyword id="KW-0507">mRNA processing</keyword>
<keyword id="KW-0934">Plastid</keyword>
<sequence length="458" mass="54385">MIFYEIFQVSFYQNFLWEKSVRLLFKVQRRLFKVSYIHDKKNLYELQKLIFQSNCARLLAIREVTQLSFNKKISGVDGKTTLNFLERFELNEYLRKNWNNWKPQSLRKRCVFDLNENLISDTISTISDRSWQVLIKFALEPVHEAFFHPFNFGFRYNVPIYKVQQAILLNLSNISFGSKKRILKVELNCNFSIFNYDYLMKKLIAPRNIKLGIFRLLELGFNLHFPENECQISTFSSLLLNVMLNGVENVHNCVRYGYYMLFFLRPMDNEKILANQILSLLYTRGIKKNSSKFLLVSNTKGFDFLGWHFKFSEKVKNGISAIPSLNNYQFFLNRVKRIVNNSNYGSVVKASKLYPVIKNWREYHKYSDLRSLSYSLFFVKKHAFSAFNSESKQDFYSSKRLLFKSFLVSESFNTVSKKYNFHILNCFSFGHLTFLSESINFFNKINLYFCVHCGMKCI</sequence>
<gene>
    <name type="primary">mat1</name>
    <name type="synonym">ycf13</name>
</gene>
<proteinExistence type="predicted"/>
<reference key="1">
    <citation type="journal article" date="1986" name="Curr. Genet.">
        <title>Euglena gracilis chloroplast DNA: analysis of a 1.6 kb intron of the psb C gene containing an open reading frame of 458 codons.</title>
        <authorList>
            <person name="Montandon P.-E."/>
            <person name="Vasserot A."/>
            <person name="Stutz E."/>
        </authorList>
    </citation>
    <scope>NUCLEOTIDE SEQUENCE [GENOMIC DNA]</scope>
    <source>
        <strain>Z / UTEX 753</strain>
    </source>
</reference>
<reference key="2">
    <citation type="journal article" date="1993" name="Nucleic Acids Res.">
        <title>Complete sequence of Euglena gracilis chloroplast DNA.</title>
        <authorList>
            <person name="Hallick R.B."/>
            <person name="Hong L."/>
            <person name="Drager R.G."/>
            <person name="Favreau M.R."/>
            <person name="Monfort A."/>
            <person name="Orsat B."/>
            <person name="Spielmann A."/>
            <person name="Stutz E."/>
        </authorList>
    </citation>
    <scope>NUCLEOTIDE SEQUENCE [LARGE SCALE GENOMIC DNA]</scope>
    <source>
        <strain>Z / UTEX 753</strain>
    </source>
</reference>
<feature type="chain" id="PRO_0000217278" description="Maturase-like protein 1">
    <location>
        <begin position="1"/>
        <end position="458"/>
    </location>
</feature>
<evidence type="ECO:0000305" key="1"/>